<sequence length="35" mass="3580">MRVAKIGVIALFLLMAIGGIGGVMLAGYSFILRAG</sequence>
<evidence type="ECO:0000255" key="1">
    <source>
        <dbReference type="HAMAP-Rule" id="MF_01362"/>
    </source>
</evidence>
<accession>B5R0F4</accession>
<protein>
    <recommendedName>
        <fullName evidence="1">UPF0387 membrane protein YohO</fullName>
    </recommendedName>
</protein>
<gene>
    <name evidence="1" type="primary">yohO</name>
    <name type="ordered locus">SEN2155</name>
</gene>
<keyword id="KW-0997">Cell inner membrane</keyword>
<keyword id="KW-1003">Cell membrane</keyword>
<keyword id="KW-0472">Membrane</keyword>
<keyword id="KW-0812">Transmembrane</keyword>
<keyword id="KW-1133">Transmembrane helix</keyword>
<reference key="1">
    <citation type="journal article" date="2008" name="Genome Res.">
        <title>Comparative genome analysis of Salmonella enteritidis PT4 and Salmonella gallinarum 287/91 provides insights into evolutionary and host adaptation pathways.</title>
        <authorList>
            <person name="Thomson N.R."/>
            <person name="Clayton D.J."/>
            <person name="Windhorst D."/>
            <person name="Vernikos G."/>
            <person name="Davidson S."/>
            <person name="Churcher C."/>
            <person name="Quail M.A."/>
            <person name="Stevens M."/>
            <person name="Jones M.A."/>
            <person name="Watson M."/>
            <person name="Barron A."/>
            <person name="Layton A."/>
            <person name="Pickard D."/>
            <person name="Kingsley R.A."/>
            <person name="Bignell A."/>
            <person name="Clark L."/>
            <person name="Harris B."/>
            <person name="Ormond D."/>
            <person name="Abdellah Z."/>
            <person name="Brooks K."/>
            <person name="Cherevach I."/>
            <person name="Chillingworth T."/>
            <person name="Woodward J."/>
            <person name="Norberczak H."/>
            <person name="Lord A."/>
            <person name="Arrowsmith C."/>
            <person name="Jagels K."/>
            <person name="Moule S."/>
            <person name="Mungall K."/>
            <person name="Saunders M."/>
            <person name="Whitehead S."/>
            <person name="Chabalgoity J.A."/>
            <person name="Maskell D."/>
            <person name="Humphreys T."/>
            <person name="Roberts M."/>
            <person name="Barrow P.A."/>
            <person name="Dougan G."/>
            <person name="Parkhill J."/>
        </authorList>
    </citation>
    <scope>NUCLEOTIDE SEQUENCE [LARGE SCALE GENOMIC DNA]</scope>
    <source>
        <strain>P125109</strain>
    </source>
</reference>
<feature type="chain" id="PRO_1000143736" description="UPF0387 membrane protein YohO">
    <location>
        <begin position="1"/>
        <end position="35"/>
    </location>
</feature>
<feature type="transmembrane region" description="Helical" evidence="1">
    <location>
        <begin position="6"/>
        <end position="26"/>
    </location>
</feature>
<organism>
    <name type="scientific">Salmonella enteritidis PT4 (strain P125109)</name>
    <dbReference type="NCBI Taxonomy" id="550537"/>
    <lineage>
        <taxon>Bacteria</taxon>
        <taxon>Pseudomonadati</taxon>
        <taxon>Pseudomonadota</taxon>
        <taxon>Gammaproteobacteria</taxon>
        <taxon>Enterobacterales</taxon>
        <taxon>Enterobacteriaceae</taxon>
        <taxon>Salmonella</taxon>
    </lineage>
</organism>
<proteinExistence type="inferred from homology"/>
<dbReference type="EMBL" id="AM933172">
    <property type="protein sequence ID" value="CAR33740.1"/>
    <property type="molecule type" value="Genomic_DNA"/>
</dbReference>
<dbReference type="RefSeq" id="WP_001261696.1">
    <property type="nucleotide sequence ID" value="NC_011294.1"/>
</dbReference>
<dbReference type="KEGG" id="set:SEN2155"/>
<dbReference type="HOGENOM" id="CLU_220259_0_0_6"/>
<dbReference type="Proteomes" id="UP000000613">
    <property type="component" value="Chromosome"/>
</dbReference>
<dbReference type="GO" id="GO:0005886">
    <property type="term" value="C:plasma membrane"/>
    <property type="evidence" value="ECO:0007669"/>
    <property type="project" value="UniProtKB-SubCell"/>
</dbReference>
<dbReference type="HAMAP" id="MF_01362">
    <property type="entry name" value="UPF0387"/>
    <property type="match status" value="1"/>
</dbReference>
<dbReference type="InterPro" id="IPR020870">
    <property type="entry name" value="UPF0387_membrane"/>
</dbReference>
<dbReference type="NCBIfam" id="NF010225">
    <property type="entry name" value="PRK13681.1"/>
    <property type="match status" value="1"/>
</dbReference>
<name>YOHO_SALEP</name>
<comment type="subcellular location">
    <subcellularLocation>
        <location evidence="1">Cell inner membrane</location>
        <topology evidence="1">Single-pass membrane protein</topology>
    </subcellularLocation>
</comment>
<comment type="similarity">
    <text evidence="1">Belongs to the UPF0387 family.</text>
</comment>